<organismHost>
    <name type="scientific">Enterobacteriaceae</name>
    <dbReference type="NCBI Taxonomy" id="543"/>
</organismHost>
<sequence length="176" mass="19577">MVDAKILNGVSTLLRAYGRLTCGVLAEKMNMLPSSMVYFLRDAVDAGVLTECNGFYDVPRPRPTPPVRRNATEQPAVDDAVWCNWRRSLPWVEGNTIPALAKEFATGVLTCESVHIVAEVDNRMCEQGMPRFVMAYIDIRLGRFICSSSVWNITDHVLRYLILDCSPAPAAVQEVA</sequence>
<keyword id="KW-0244">Early protein</keyword>
<keyword id="KW-1035">Host cytoplasm</keyword>
<keyword id="KW-1185">Reference proteome</keyword>
<organism>
    <name type="scientific">Escherichia phage Mu</name>
    <name type="common">Bacteriophage Mu</name>
    <dbReference type="NCBI Taxonomy" id="2681603"/>
    <lineage>
        <taxon>Viruses</taxon>
        <taxon>Duplodnaviria</taxon>
        <taxon>Heunggongvirae</taxon>
        <taxon>Uroviricota</taxon>
        <taxon>Caudoviricetes</taxon>
        <taxon>Muvirus</taxon>
        <taxon>Muvirus mu</taxon>
    </lineage>
</organism>
<evidence type="ECO:0000269" key="1">
    <source>
    </source>
</evidence>
<evidence type="ECO:0000305" key="2"/>
<reference key="1">
    <citation type="book" date="1987" name="Phage Mu">
        <title>Sequence of the left end of Mu.</title>
        <editorList>
            <person name="Symonds N."/>
            <person name="Toussaint A."/>
            <person name="van de Putte P."/>
            <person name="Howe M.M."/>
        </editorList>
        <authorList>
            <person name="Priess H."/>
            <person name="Brauer B."/>
            <person name="Schmidt C."/>
            <person name="Kamp D."/>
        </authorList>
    </citation>
    <scope>NUCLEOTIDE SEQUENCE [GENOMIC DNA]</scope>
</reference>
<reference key="2">
    <citation type="journal article" date="2002" name="J. Mol. Biol.">
        <title>Bacteriophage Mu genome sequence: analysis and comparison with Mu-like prophages in Haemophilus, Neisseria and Deinococcus.</title>
        <authorList>
            <person name="Morgan G.J."/>
            <person name="Hatfull G.F."/>
            <person name="Casjens S."/>
            <person name="Hendrix R.W."/>
        </authorList>
    </citation>
    <scope>NUCLEOTIDE SEQUENCE [LARGE SCALE GENOMIC DNA]</scope>
</reference>
<reference key="3">
    <citation type="journal article" date="1989" name="J. Bacteriol.">
        <title>Localization and regulation of bacteriophage Mu promoters.</title>
        <authorList>
            <person name="Stoddard S.F."/>
            <person name="Howe M.M."/>
        </authorList>
    </citation>
    <scope>INDUCTION</scope>
</reference>
<dbReference type="EMBL" id="M64097">
    <property type="protein sequence ID" value="AAA32396.1"/>
    <property type="status" value="ALT_FRAME"/>
    <property type="molecule type" value="Genomic_DNA"/>
</dbReference>
<dbReference type="EMBL" id="M64097">
    <property type="protein sequence ID" value="AAA32397.1"/>
    <property type="status" value="ALT_FRAME"/>
    <property type="molecule type" value="Genomic_DNA"/>
</dbReference>
<dbReference type="EMBL" id="M64097">
    <property type="protein sequence ID" value="AAA32398.1"/>
    <property type="status" value="ALT_FRAME"/>
    <property type="molecule type" value="Genomic_DNA"/>
</dbReference>
<dbReference type="EMBL" id="AF083977">
    <property type="protein sequence ID" value="AAF01088.1"/>
    <property type="molecule type" value="Genomic_DNA"/>
</dbReference>
<dbReference type="RefSeq" id="NP_050615.1">
    <property type="nucleotide sequence ID" value="NC_000929.1"/>
</dbReference>
<dbReference type="SMR" id="Q9T1X7"/>
<dbReference type="GeneID" id="2636297"/>
<dbReference type="KEGG" id="vg:2636297"/>
<dbReference type="Proteomes" id="UP000002611">
    <property type="component" value="Genome"/>
</dbReference>
<dbReference type="Proteomes" id="UP000401936">
    <property type="component" value="Segment"/>
</dbReference>
<dbReference type="GO" id="GO:0030430">
    <property type="term" value="C:host cell cytoplasm"/>
    <property type="evidence" value="ECO:0007669"/>
    <property type="project" value="UniProtKB-SubCell"/>
</dbReference>
<accession>Q9T1X7</accession>
<accession>Q38484</accession>
<accession>Q38485</accession>
<accession>Q38486</accession>
<gene>
    <name type="ordered locus">Mup11</name>
</gene>
<comment type="subcellular location">
    <subcellularLocation>
        <location evidence="2">Host cytoplasm</location>
    </subcellularLocation>
</comment>
<comment type="induction">
    <text evidence="1">Expressed in the early phase of the viral replicative cycle. Expression of early genes is repressed by viral Repc (latency) and favored by viral Ner protein.</text>
</comment>
<comment type="sequence caution" evidence="2">
    <conflict type="frameshift">
        <sequence resource="EMBL-CDS" id="AAA32396"/>
    </conflict>
</comment>
<comment type="sequence caution" evidence="2">
    <conflict type="frameshift">
        <sequence resource="EMBL-CDS" id="AAA32397"/>
    </conflict>
</comment>
<comment type="sequence caution" evidence="2">
    <conflict type="frameshift">
        <sequence resource="EMBL-CDS" id="AAA32398"/>
    </conflict>
</comment>
<proteinExistence type="evidence at transcript level"/>
<feature type="chain" id="PRO_0000077806" description="Uncharacterized protein gp11">
    <location>
        <begin position="1"/>
        <end position="176"/>
    </location>
</feature>
<protein>
    <recommendedName>
        <fullName>Uncharacterized protein gp11</fullName>
    </recommendedName>
    <alternativeName>
        <fullName>Gene product 11</fullName>
        <shortName>gp11</shortName>
    </alternativeName>
</protein>
<name>GP11_BPMU</name>